<keyword id="KW-0597">Phosphoprotein</keyword>
<keyword id="KW-1185">Reference proteome</keyword>
<keyword id="KW-0946">Virion</keyword>
<keyword id="KW-0920">Virion tegument</keyword>
<protein>
    <recommendedName>
        <fullName>Large structural phosphoprotein</fullName>
    </recommendedName>
    <alternativeName>
        <fullName>100 kDa phosphoprotein</fullName>
        <shortName>pp100</shortName>
    </alternativeName>
    <alternativeName>
        <fullName>Major antigenic structural protein</fullName>
    </alternativeName>
</protein>
<proteinExistence type="inferred from homology"/>
<feature type="chain" id="PRO_0000116300" description="Large structural phosphoprotein">
    <location>
        <begin position="1"/>
        <end position="870"/>
    </location>
</feature>
<feature type="region of interest" description="Disordered" evidence="2">
    <location>
        <begin position="612"/>
        <end position="662"/>
    </location>
</feature>
<feature type="region of interest" description="Disordered" evidence="2">
    <location>
        <begin position="840"/>
        <end position="870"/>
    </location>
</feature>
<feature type="compositionally biased region" description="Basic and acidic residues" evidence="2">
    <location>
        <begin position="612"/>
        <end position="649"/>
    </location>
</feature>
<name>P100_HHV6U</name>
<gene>
    <name type="primary">U11</name>
    <name type="synonym">P1LF1</name>
</gene>
<dbReference type="EMBL" id="M87287">
    <property type="protein sequence ID" value="AAA46012.1"/>
    <property type="molecule type" value="Genomic_DNA"/>
</dbReference>
<dbReference type="EMBL" id="L25528">
    <property type="protein sequence ID" value="AAA16716.1"/>
    <property type="status" value="ALT_INIT"/>
    <property type="molecule type" value="Genomic_DNA"/>
</dbReference>
<dbReference type="EMBL" id="X83413">
    <property type="protein sequence ID" value="CAA58438.1"/>
    <property type="molecule type" value="Genomic_DNA"/>
</dbReference>
<dbReference type="PIR" id="T09303">
    <property type="entry name" value="XPBE12"/>
</dbReference>
<dbReference type="RefSeq" id="NP_042902.1">
    <property type="nucleotide sequence ID" value="NC_001664.2"/>
</dbReference>
<dbReference type="SMR" id="Q00701"/>
<dbReference type="DNASU" id="1487891"/>
<dbReference type="GeneID" id="1487891"/>
<dbReference type="KEGG" id="vg:1487891"/>
<dbReference type="Proteomes" id="UP000009295">
    <property type="component" value="Segment"/>
</dbReference>
<dbReference type="GO" id="GO:0019033">
    <property type="term" value="C:viral tegument"/>
    <property type="evidence" value="ECO:0007669"/>
    <property type="project" value="UniProtKB-SubCell"/>
</dbReference>
<dbReference type="GO" id="GO:0005198">
    <property type="term" value="F:structural molecule activity"/>
    <property type="evidence" value="ECO:0007669"/>
    <property type="project" value="InterPro"/>
</dbReference>
<dbReference type="InterPro" id="IPR010340">
    <property type="entry name" value="Herpes_UL11/UL32"/>
</dbReference>
<dbReference type="Pfam" id="PF06070">
    <property type="entry name" value="Herpes_UL32"/>
    <property type="match status" value="2"/>
</dbReference>
<reference key="1">
    <citation type="journal article" date="1992" name="J. Virol.">
        <title>Gene for the major antigenic structural protein (p100) of human herpesvirus 6.</title>
        <authorList>
            <person name="Neipel F."/>
            <person name="Ellinger K."/>
            <person name="Fleckenstein B."/>
        </authorList>
    </citation>
    <scope>NUCLEOTIDE SEQUENCE [GENOMIC DNA]</scope>
</reference>
<reference key="2">
    <citation type="journal article" date="1994" name="J. Virol.">
        <title>Nucleotide sequence analysis of a 38.5-kilobase-pair region of the genome of human herpesvirus 6 encoding human cytomegalovirus immediate-early gene homologs and transactivating functions.</title>
        <authorList>
            <person name="Nicholas J."/>
            <person name="Martin M.E.D."/>
        </authorList>
    </citation>
    <scope>NUCLEOTIDE SEQUENCE [GENOMIC DNA]</scope>
</reference>
<reference key="3">
    <citation type="journal article" date="1995" name="Virology">
        <title>The DNA sequence of human herpesvirus-6: structure, coding content, and genome evolution.</title>
        <authorList>
            <person name="Gompels U.A."/>
            <person name="Nicholas J."/>
            <person name="Lawrence G.L."/>
            <person name="Jones M."/>
            <person name="Thomson B.J."/>
            <person name="Martin M.E.D."/>
            <person name="Efstathiou S."/>
            <person name="Craxton M.A."/>
            <person name="Macaulay H.A."/>
        </authorList>
    </citation>
    <scope>NUCLEOTIDE SEQUENCE [LARGE SCALE GENOMIC DNA]</scope>
</reference>
<sequence>MDLQRHPIPFAWLDRDKVERLTDFLSNLERLDNVDLREHPHVTNSCVVREGDDVDDLKTLYNLLVLWLMYHYVLSKRKPDYNAIWQDITKLQSVVNEYLNSKGLNKGIFENMFTNKEKFESQFSDINRALLRLGNFIKWGSNVAIDTPYVNLTAEDSSEIENNLQDAEKNMLWYTVYNINDPWDENGYLITSINKLIYLGKLFLALTQSWSKLEKVAMSQIVITQNHLSGHLRRHDNFNIVYSHRVLQTPLTGQRVESFLKIITSDYDIIKSSLESHSASKAFSMSEIGPNSLMDFVPLRGDIHSNLTLPSMSIDTKKSSLDPARLKKSNSRSLDSFLRMQRQPKFLELDSVDNAGEKILLKEATLGGENVKATTPASSVSLMSGVESPSSFTSTNLDLPLSSFTSTNLDLRDKSHGNYKIGPSGILDFNVKFPPNAQLNTNGVDLLQDKTSIGSPSSGITDVVNGFANLNLHQNKSNVSPPWSRNTAANADFLDPVHRFVPEQTGTPFVLNNSDVAGSEAKHTTYSTETGVSPRNVFLIKDLRGKDGFRKQKQSDIPKSLTKERNDKAIMHSREVTGDSGDATETVGARNSPALRKIKQANDFFAGLNKKNDRDVLRGGKGNSKDLHSGGNAKKKEMSGKFNDDKEMTRNGQEPSRSLMGDARNAGDEQYIQAGLGQRVNNLLSQFTNLISLGEKGIEDILQNQRGTELKLATENKSGRESEEANVEKILEVSNPQDMFKNFRLQNDLDSVQSPFRLPDADLSRELDSASFKDALDLKLPGNGEREIDLALEKVKVGETETSDLKVGQDESFVPAQLMKVETPEEKDDIIEQMVLRIRQDGETDENTVSGPGVAESLDIEAKGESAIAS</sequence>
<accession>Q00701</accession>
<comment type="subcellular location">
    <subcellularLocation>
        <location evidence="3">Virion tegument</location>
    </subcellularLocation>
    <text evidence="1">Also found in dense bodies.</text>
</comment>
<comment type="PTM">
    <text evidence="1">Phosphorylated at multiple sites.</text>
</comment>
<comment type="similarity">
    <text evidence="3">Belongs to the herpesviridae large structural phosphoprotein family.</text>
</comment>
<comment type="sequence caution" evidence="3">
    <conflict type="erroneous initiation">
        <sequence resource="EMBL-CDS" id="AAA16716"/>
    </conflict>
</comment>
<organism>
    <name type="scientific">Human herpesvirus 6A (strain Uganda-1102)</name>
    <name type="common">HHV-6 variant A</name>
    <name type="synonym">Human B lymphotropic virus</name>
    <dbReference type="NCBI Taxonomy" id="10370"/>
    <lineage>
        <taxon>Viruses</taxon>
        <taxon>Duplodnaviria</taxon>
        <taxon>Heunggongvirae</taxon>
        <taxon>Peploviricota</taxon>
        <taxon>Herviviricetes</taxon>
        <taxon>Herpesvirales</taxon>
        <taxon>Orthoherpesviridae</taxon>
        <taxon>Betaherpesvirinae</taxon>
        <taxon>Roseolovirus</taxon>
        <taxon>Roseolovirus humanbeta6a</taxon>
        <taxon>Human betaherpesvirus 6A</taxon>
    </lineage>
</organism>
<evidence type="ECO:0000250" key="1"/>
<evidence type="ECO:0000256" key="2">
    <source>
        <dbReference type="SAM" id="MobiDB-lite"/>
    </source>
</evidence>
<evidence type="ECO:0000305" key="3"/>
<organismHost>
    <name type="scientific">Homo sapiens</name>
    <name type="common">Human</name>
    <dbReference type="NCBI Taxonomy" id="9606"/>
</organismHost>